<sequence length="259" mass="29097">MNLLEKTRKINAMLQKAAGRPVNFKEMAETLCEVIEANVFVVSRRGKLLGFAIKQSIENERMKRMLEERQFPEEYTKNLFNITETSPNIDINSEYTAFPVENRDLFKTGLTTIVPINGGGERLGTLILSRLDREFDNDDLILAEYGATVVGMEILREKAEEIEEEARSKAVVQMAISSLSYSELEAIEHIFEELDGTEGLLVASKIADRVGITRSVIVNALRKLESAGVIESRSLGMKGTYIKVLNDKFLSELEKLKSS</sequence>
<comment type="function">
    <text evidence="1">DNA-binding global transcriptional regulator which is involved in the adaptive response to starvation and acts by directly or indirectly controlling the expression of numerous genes in response to nutrient availability. During rapid exponential growth, CodY is highly active and represses genes whose products allow adaptation to nutrient depletion.</text>
</comment>
<comment type="subcellular location">
    <subcellularLocation>
        <location evidence="1">Cytoplasm</location>
    </subcellularLocation>
</comment>
<comment type="similarity">
    <text evidence="1">Belongs to the CodY family.</text>
</comment>
<reference key="1">
    <citation type="journal article" date="2004" name="Nucleic Acids Res.">
        <title>Thermoadaptation trait revealed by the genome sequence of thermophilic Geobacillus kaustophilus.</title>
        <authorList>
            <person name="Takami H."/>
            <person name="Takaki Y."/>
            <person name="Chee G.-J."/>
            <person name="Nishi S."/>
            <person name="Shimamura S."/>
            <person name="Suzuki H."/>
            <person name="Matsui S."/>
            <person name="Uchiyama I."/>
        </authorList>
    </citation>
    <scope>NUCLEOTIDE SEQUENCE [LARGE SCALE GENOMIC DNA]</scope>
    <source>
        <strain>HTA426</strain>
    </source>
</reference>
<feature type="chain" id="PRO_0000213225" description="Global transcriptional regulator CodY">
    <location>
        <begin position="1"/>
        <end position="259"/>
    </location>
</feature>
<feature type="DNA-binding region" description="H-T-H motif" evidence="1">
    <location>
        <begin position="203"/>
        <end position="222"/>
    </location>
</feature>
<feature type="region of interest" description="GAF domain" evidence="1">
    <location>
        <begin position="1"/>
        <end position="155"/>
    </location>
</feature>
<feature type="modified residue" description="Phosphoserine" evidence="1">
    <location>
        <position position="215"/>
    </location>
</feature>
<keyword id="KW-0963">Cytoplasm</keyword>
<keyword id="KW-0238">DNA-binding</keyword>
<keyword id="KW-0597">Phosphoprotein</keyword>
<keyword id="KW-1185">Reference proteome</keyword>
<keyword id="KW-0678">Repressor</keyword>
<keyword id="KW-0804">Transcription</keyword>
<keyword id="KW-0805">Transcription regulation</keyword>
<organism>
    <name type="scientific">Geobacillus kaustophilus (strain HTA426)</name>
    <dbReference type="NCBI Taxonomy" id="235909"/>
    <lineage>
        <taxon>Bacteria</taxon>
        <taxon>Bacillati</taxon>
        <taxon>Bacillota</taxon>
        <taxon>Bacilli</taxon>
        <taxon>Bacillales</taxon>
        <taxon>Anoxybacillaceae</taxon>
        <taxon>Geobacillus</taxon>
        <taxon>Geobacillus thermoleovorans group</taxon>
    </lineage>
</organism>
<evidence type="ECO:0000255" key="1">
    <source>
        <dbReference type="HAMAP-Rule" id="MF_00621"/>
    </source>
</evidence>
<dbReference type="EMBL" id="BA000043">
    <property type="protein sequence ID" value="BAD75500.1"/>
    <property type="molecule type" value="Genomic_DNA"/>
</dbReference>
<dbReference type="RefSeq" id="WP_011230715.1">
    <property type="nucleotide sequence ID" value="NC_006510.1"/>
</dbReference>
<dbReference type="SMR" id="Q5L0N0"/>
<dbReference type="STRING" id="235909.GK1215"/>
<dbReference type="GeneID" id="32063109"/>
<dbReference type="KEGG" id="gka:GK1215"/>
<dbReference type="eggNOG" id="COG4465">
    <property type="taxonomic scope" value="Bacteria"/>
</dbReference>
<dbReference type="HOGENOM" id="CLU_089581_0_0_9"/>
<dbReference type="Proteomes" id="UP000001172">
    <property type="component" value="Chromosome"/>
</dbReference>
<dbReference type="GO" id="GO:0005737">
    <property type="term" value="C:cytoplasm"/>
    <property type="evidence" value="ECO:0007669"/>
    <property type="project" value="UniProtKB-SubCell"/>
</dbReference>
<dbReference type="GO" id="GO:0003677">
    <property type="term" value="F:DNA binding"/>
    <property type="evidence" value="ECO:0007669"/>
    <property type="project" value="UniProtKB-UniRule"/>
</dbReference>
<dbReference type="GO" id="GO:0003700">
    <property type="term" value="F:DNA-binding transcription factor activity"/>
    <property type="evidence" value="ECO:0007669"/>
    <property type="project" value="InterPro"/>
</dbReference>
<dbReference type="GO" id="GO:0005525">
    <property type="term" value="F:GTP binding"/>
    <property type="evidence" value="ECO:0007669"/>
    <property type="project" value="InterPro"/>
</dbReference>
<dbReference type="GO" id="GO:0045892">
    <property type="term" value="P:negative regulation of DNA-templated transcription"/>
    <property type="evidence" value="ECO:0007669"/>
    <property type="project" value="UniProtKB-UniRule"/>
</dbReference>
<dbReference type="FunFam" id="1.10.10.10:FF:000034">
    <property type="entry name" value="GTP-sensing transcriptional pleiotropic repressor CodY"/>
    <property type="match status" value="1"/>
</dbReference>
<dbReference type="FunFam" id="3.30.450.40:FF:000003">
    <property type="entry name" value="GTP-sensing transcriptional pleiotropic repressor CodY"/>
    <property type="match status" value="1"/>
</dbReference>
<dbReference type="Gene3D" id="3.30.450.40">
    <property type="match status" value="1"/>
</dbReference>
<dbReference type="Gene3D" id="1.10.10.10">
    <property type="entry name" value="Winged helix-like DNA-binding domain superfamily/Winged helix DNA-binding domain"/>
    <property type="match status" value="1"/>
</dbReference>
<dbReference type="HAMAP" id="MF_00621">
    <property type="entry name" value="HTH_type_CodY"/>
    <property type="match status" value="1"/>
</dbReference>
<dbReference type="InterPro" id="IPR014154">
    <property type="entry name" value="CodY"/>
</dbReference>
<dbReference type="InterPro" id="IPR029016">
    <property type="entry name" value="GAF-like_dom_sf"/>
</dbReference>
<dbReference type="InterPro" id="IPR013198">
    <property type="entry name" value="GTP_trans_reg_CodY_C"/>
</dbReference>
<dbReference type="InterPro" id="IPR010312">
    <property type="entry name" value="Transc_reg_CodY_N"/>
</dbReference>
<dbReference type="InterPro" id="IPR036388">
    <property type="entry name" value="WH-like_DNA-bd_sf"/>
</dbReference>
<dbReference type="InterPro" id="IPR036390">
    <property type="entry name" value="WH_DNA-bd_sf"/>
</dbReference>
<dbReference type="NCBIfam" id="TIGR02787">
    <property type="entry name" value="codY_Gpos"/>
    <property type="match status" value="1"/>
</dbReference>
<dbReference type="NCBIfam" id="NF003170">
    <property type="entry name" value="PRK04158.1"/>
    <property type="match status" value="1"/>
</dbReference>
<dbReference type="PANTHER" id="PTHR40062:SF1">
    <property type="entry name" value="GLOBAL TRANSCRIPTIONAL REGULATOR CODY"/>
    <property type="match status" value="1"/>
</dbReference>
<dbReference type="PANTHER" id="PTHR40062">
    <property type="entry name" value="GTP-SENSING TRANSCRIPTIONAL PLEIOTROPIC REPRESSOR CODY"/>
    <property type="match status" value="1"/>
</dbReference>
<dbReference type="Pfam" id="PF06018">
    <property type="entry name" value="CodY"/>
    <property type="match status" value="1"/>
</dbReference>
<dbReference type="Pfam" id="PF08222">
    <property type="entry name" value="HTH_CodY"/>
    <property type="match status" value="1"/>
</dbReference>
<dbReference type="PIRSF" id="PIRSF011572">
    <property type="entry name" value="GTP_sensing_CodY"/>
    <property type="match status" value="1"/>
</dbReference>
<dbReference type="SUPFAM" id="SSF46785">
    <property type="entry name" value="Winged helix' DNA-binding domain"/>
    <property type="match status" value="1"/>
</dbReference>
<name>CODY_GEOKA</name>
<proteinExistence type="inferred from homology"/>
<accession>Q5L0N0</accession>
<gene>
    <name evidence="1" type="primary">codY</name>
    <name type="ordered locus">GK1215</name>
</gene>
<protein>
    <recommendedName>
        <fullName evidence="1">Global transcriptional regulator CodY</fullName>
    </recommendedName>
</protein>